<reference key="1">
    <citation type="submission" date="2001-08" db="EMBL/GenBank/DDBJ databases">
        <title>Molecular cloning of human adenylyl cyclase gene.</title>
        <authorList>
            <person name="Guo J.H."/>
            <person name="Yu L."/>
        </authorList>
    </citation>
    <scope>NUCLEOTIDE SEQUENCE [LARGE SCALE MRNA] (ISOFORM 1)</scope>
</reference>
<reference key="2">
    <citation type="journal article" date="2004" name="Nat. Genet.">
        <title>Complete sequencing and characterization of 21,243 full-length human cDNAs.</title>
        <authorList>
            <person name="Ota T."/>
            <person name="Suzuki Y."/>
            <person name="Nishikawa T."/>
            <person name="Otsuki T."/>
            <person name="Sugiyama T."/>
            <person name="Irie R."/>
            <person name="Wakamatsu A."/>
            <person name="Hayashi K."/>
            <person name="Sato H."/>
            <person name="Nagai K."/>
            <person name="Kimura K."/>
            <person name="Makita H."/>
            <person name="Sekine M."/>
            <person name="Obayashi M."/>
            <person name="Nishi T."/>
            <person name="Shibahara T."/>
            <person name="Tanaka T."/>
            <person name="Ishii S."/>
            <person name="Yamamoto J."/>
            <person name="Saito K."/>
            <person name="Kawai Y."/>
            <person name="Isono Y."/>
            <person name="Nakamura Y."/>
            <person name="Nagahari K."/>
            <person name="Murakami K."/>
            <person name="Yasuda T."/>
            <person name="Iwayanagi T."/>
            <person name="Wagatsuma M."/>
            <person name="Shiratori A."/>
            <person name="Sudo H."/>
            <person name="Hosoiri T."/>
            <person name="Kaku Y."/>
            <person name="Kodaira H."/>
            <person name="Kondo H."/>
            <person name="Sugawara M."/>
            <person name="Takahashi M."/>
            <person name="Kanda K."/>
            <person name="Yokoi T."/>
            <person name="Furuya T."/>
            <person name="Kikkawa E."/>
            <person name="Omura Y."/>
            <person name="Abe K."/>
            <person name="Kamihara K."/>
            <person name="Katsuta N."/>
            <person name="Sato K."/>
            <person name="Tanikawa M."/>
            <person name="Yamazaki M."/>
            <person name="Ninomiya K."/>
            <person name="Ishibashi T."/>
            <person name="Yamashita H."/>
            <person name="Murakawa K."/>
            <person name="Fujimori K."/>
            <person name="Tanai H."/>
            <person name="Kimata M."/>
            <person name="Watanabe M."/>
            <person name="Hiraoka S."/>
            <person name="Chiba Y."/>
            <person name="Ishida S."/>
            <person name="Ono Y."/>
            <person name="Takiguchi S."/>
            <person name="Watanabe S."/>
            <person name="Yosida M."/>
            <person name="Hotuta T."/>
            <person name="Kusano J."/>
            <person name="Kanehori K."/>
            <person name="Takahashi-Fujii A."/>
            <person name="Hara H."/>
            <person name="Tanase T.-O."/>
            <person name="Nomura Y."/>
            <person name="Togiya S."/>
            <person name="Komai F."/>
            <person name="Hara R."/>
            <person name="Takeuchi K."/>
            <person name="Arita M."/>
            <person name="Imose N."/>
            <person name="Musashino K."/>
            <person name="Yuuki H."/>
            <person name="Oshima A."/>
            <person name="Sasaki N."/>
            <person name="Aotsuka S."/>
            <person name="Yoshikawa Y."/>
            <person name="Matsunawa H."/>
            <person name="Ichihara T."/>
            <person name="Shiohata N."/>
            <person name="Sano S."/>
            <person name="Moriya S."/>
            <person name="Momiyama H."/>
            <person name="Satoh N."/>
            <person name="Takami S."/>
            <person name="Terashima Y."/>
            <person name="Suzuki O."/>
            <person name="Nakagawa S."/>
            <person name="Senoh A."/>
            <person name="Mizoguchi H."/>
            <person name="Goto Y."/>
            <person name="Shimizu F."/>
            <person name="Wakebe H."/>
            <person name="Hishigaki H."/>
            <person name="Watanabe T."/>
            <person name="Sugiyama A."/>
            <person name="Takemoto M."/>
            <person name="Kawakami B."/>
            <person name="Yamazaki M."/>
            <person name="Watanabe K."/>
            <person name="Kumagai A."/>
            <person name="Itakura S."/>
            <person name="Fukuzumi Y."/>
            <person name="Fujimori Y."/>
            <person name="Komiyama M."/>
            <person name="Tashiro H."/>
            <person name="Tanigami A."/>
            <person name="Fujiwara T."/>
            <person name="Ono T."/>
            <person name="Yamada K."/>
            <person name="Fujii Y."/>
            <person name="Ozaki K."/>
            <person name="Hirao M."/>
            <person name="Ohmori Y."/>
            <person name="Kawabata A."/>
            <person name="Hikiji T."/>
            <person name="Kobatake N."/>
            <person name="Inagaki H."/>
            <person name="Ikema Y."/>
            <person name="Okamoto S."/>
            <person name="Okitani R."/>
            <person name="Kawakami T."/>
            <person name="Noguchi S."/>
            <person name="Itoh T."/>
            <person name="Shigeta K."/>
            <person name="Senba T."/>
            <person name="Matsumura K."/>
            <person name="Nakajima Y."/>
            <person name="Mizuno T."/>
            <person name="Morinaga M."/>
            <person name="Sasaki M."/>
            <person name="Togashi T."/>
            <person name="Oyama M."/>
            <person name="Hata H."/>
            <person name="Watanabe M."/>
            <person name="Komatsu T."/>
            <person name="Mizushima-Sugano J."/>
            <person name="Satoh T."/>
            <person name="Shirai Y."/>
            <person name="Takahashi Y."/>
            <person name="Nakagawa K."/>
            <person name="Okumura K."/>
            <person name="Nagase T."/>
            <person name="Nomura N."/>
            <person name="Kikuchi H."/>
            <person name="Masuho Y."/>
            <person name="Yamashita R."/>
            <person name="Nakai K."/>
            <person name="Yada T."/>
            <person name="Nakamura Y."/>
            <person name="Ohara O."/>
            <person name="Isogai T."/>
            <person name="Sugano S."/>
        </authorList>
    </citation>
    <scope>NUCLEOTIDE SEQUENCE [LARGE SCALE MRNA] (ISOFORM 2)</scope>
    <source>
        <tissue>Amygdala</tissue>
    </source>
</reference>
<reference key="3">
    <citation type="journal article" date="2004" name="Nature">
        <title>The DNA sequence and comparative analysis of human chromosome 5.</title>
        <authorList>
            <person name="Schmutz J."/>
            <person name="Martin J."/>
            <person name="Terry A."/>
            <person name="Couronne O."/>
            <person name="Grimwood J."/>
            <person name="Lowry S."/>
            <person name="Gordon L.A."/>
            <person name="Scott D."/>
            <person name="Xie G."/>
            <person name="Huang W."/>
            <person name="Hellsten U."/>
            <person name="Tran-Gyamfi M."/>
            <person name="She X."/>
            <person name="Prabhakar S."/>
            <person name="Aerts A."/>
            <person name="Altherr M."/>
            <person name="Bajorek E."/>
            <person name="Black S."/>
            <person name="Branscomb E."/>
            <person name="Caoile C."/>
            <person name="Challacombe J.F."/>
            <person name="Chan Y.M."/>
            <person name="Denys M."/>
            <person name="Detter J.C."/>
            <person name="Escobar J."/>
            <person name="Flowers D."/>
            <person name="Fotopulos D."/>
            <person name="Glavina T."/>
            <person name="Gomez M."/>
            <person name="Gonzales E."/>
            <person name="Goodstein D."/>
            <person name="Grigoriev I."/>
            <person name="Groza M."/>
            <person name="Hammon N."/>
            <person name="Hawkins T."/>
            <person name="Haydu L."/>
            <person name="Israni S."/>
            <person name="Jett J."/>
            <person name="Kadner K."/>
            <person name="Kimball H."/>
            <person name="Kobayashi A."/>
            <person name="Lopez F."/>
            <person name="Lou Y."/>
            <person name="Martinez D."/>
            <person name="Medina C."/>
            <person name="Morgan J."/>
            <person name="Nandkeshwar R."/>
            <person name="Noonan J.P."/>
            <person name="Pitluck S."/>
            <person name="Pollard M."/>
            <person name="Predki P."/>
            <person name="Priest J."/>
            <person name="Ramirez L."/>
            <person name="Retterer J."/>
            <person name="Rodriguez A."/>
            <person name="Rogers S."/>
            <person name="Salamov A."/>
            <person name="Salazar A."/>
            <person name="Thayer N."/>
            <person name="Tice H."/>
            <person name="Tsai M."/>
            <person name="Ustaszewska A."/>
            <person name="Vo N."/>
            <person name="Wheeler J."/>
            <person name="Wu K."/>
            <person name="Yang J."/>
            <person name="Dickson M."/>
            <person name="Cheng J.-F."/>
            <person name="Eichler E.E."/>
            <person name="Olsen A."/>
            <person name="Pennacchio L.A."/>
            <person name="Rokhsar D.S."/>
            <person name="Richardson P."/>
            <person name="Lucas S.M."/>
            <person name="Myers R.M."/>
            <person name="Rubin E.M."/>
        </authorList>
    </citation>
    <scope>NUCLEOTIDE SEQUENCE [LARGE SCALE GENOMIC DNA]</scope>
</reference>
<reference key="4">
    <citation type="journal article" date="2004" name="Genome Res.">
        <title>The status, quality, and expansion of the NIH full-length cDNA project: the Mammalian Gene Collection (MGC).</title>
        <authorList>
            <consortium name="The MGC Project Team"/>
        </authorList>
    </citation>
    <scope>NUCLEOTIDE SEQUENCE [LARGE SCALE MRNA] (ISOFORM 1)</scope>
    <scope>VARIANT LEU-147</scope>
</reference>
<reference key="5">
    <citation type="journal article" date="1999" name="DNA Res.">
        <title>Prediction of the coding sequences of unidentified human genes. XIV. The complete sequences of 100 new cDNA clones from brain which code for large proteins in vitro.</title>
        <authorList>
            <person name="Kikuno R."/>
            <person name="Nagase T."/>
            <person name="Ishikawa K."/>
            <person name="Hirosawa M."/>
            <person name="Miyajima N."/>
            <person name="Tanaka A."/>
            <person name="Kotani H."/>
            <person name="Nomura N."/>
            <person name="Ohara O."/>
        </authorList>
    </citation>
    <scope>NUCLEOTIDE SEQUENCE [LARGE SCALE MRNA] OF 205-1091 (ISOFORM 1)</scope>
    <source>
        <tissue>Brain</tissue>
    </source>
</reference>
<reference key="6">
    <citation type="journal article" date="1992" name="Hum. Genet.">
        <title>Different chromosomal localization of two adenylyl cyclase genes expressed in human brain.</title>
        <authorList>
            <person name="Stengel D."/>
            <person name="Parma J."/>
            <person name="Gannage M.-H."/>
            <person name="Roeckel N."/>
            <person name="Mattei M.-G."/>
            <person name="Barouki R."/>
            <person name="Hanoune J."/>
        </authorList>
    </citation>
    <scope>NUCLEOTIDE SEQUENCE [MRNA] OF 616-1091 (ISOFORM 1)</scope>
    <source>
        <tissue>Brain</tissue>
    </source>
</reference>
<reference key="7">
    <citation type="journal article" date="1993" name="Biochem. Biophys. Res. Commun.">
        <title>A novel adenylyl cyclase sequence cloned from the human erythroleukemia cell line.</title>
        <authorList>
            <person name="Hellevuo K."/>
            <person name="Yoshimura M."/>
            <person name="Kao M."/>
            <person name="Hoffman P.L."/>
            <person name="Cooper D.M.F."/>
            <person name="Tabakoff B."/>
        </authorList>
    </citation>
    <scope>NUCLEOTIDE SEQUENCE [MRNA] OF 948-1017 (ISOFORM 1)</scope>
    <scope>TISSUE SPECIFICITY</scope>
</reference>
<reference key="8">
    <citation type="journal article" date="2001" name="J. Clin. Endocrinol. Metab.">
        <title>Expression and regulation of adenylyl cyclase isoforms in the human adrenal gland.</title>
        <authorList>
            <person name="Cote M."/>
            <person name="Guillon G."/>
            <person name="Payet M.D."/>
            <person name="Gallo-Payet N."/>
        </authorList>
    </citation>
    <scope>TISSUE SPECIFICITY</scope>
    <scope>SUBCELLULAR LOCATION</scope>
</reference>
<reference key="9">
    <citation type="journal article" date="2004" name="Mol. Pharmacol.">
        <title>Raf kinase activation of adenylyl cyclases: isoform-selective regulation.</title>
        <authorList>
            <person name="Ding Q."/>
            <person name="Gros R."/>
            <person name="Gray I.D."/>
            <person name="Taussig R."/>
            <person name="Ferguson S.S."/>
            <person name="Feldman R.D."/>
        </authorList>
    </citation>
    <scope>FUNCTION</scope>
    <scope>CATALYTIC ACTIVITY</scope>
    <scope>COFACTOR</scope>
    <scope>ACTIVITY REGULATION</scope>
    <scope>PHOSPHORYLATION BY RAF1</scope>
    <scope>SUBCELLULAR LOCATION</scope>
    <scope>INTERACTION WITH RAF1</scope>
</reference>
<reference key="10">
    <citation type="journal article" date="2011" name="J. Pharmacol. Exp. Ther.">
        <title>Human bronchial smooth muscle cells express adenylyl cyclase isoforms 2, 4, and 6 in distinct membrane microdomains.</title>
        <authorList>
            <person name="Bogard A.S."/>
            <person name="Xu C."/>
            <person name="Ostrom R.S."/>
        </authorList>
    </citation>
    <scope>SUBCELLULAR LOCATION</scope>
</reference>
<dbReference type="EC" id="4.6.1.1" evidence="6"/>
<dbReference type="EMBL" id="AF410885">
    <property type="protein sequence ID" value="AAP97285.1"/>
    <property type="molecule type" value="mRNA"/>
</dbReference>
<dbReference type="EMBL" id="AK294555">
    <property type="protein sequence ID" value="BAH11807.1"/>
    <property type="molecule type" value="mRNA"/>
</dbReference>
<dbReference type="EMBL" id="AC010346">
    <property type="status" value="NOT_ANNOTATED_CDS"/>
    <property type="molecule type" value="Genomic_DNA"/>
</dbReference>
<dbReference type="EMBL" id="AC010437">
    <property type="status" value="NOT_ANNOTATED_CDS"/>
    <property type="molecule type" value="Genomic_DNA"/>
</dbReference>
<dbReference type="EMBL" id="AC024577">
    <property type="status" value="NOT_ANNOTATED_CDS"/>
    <property type="molecule type" value="Genomic_DNA"/>
</dbReference>
<dbReference type="EMBL" id="AC093305">
    <property type="status" value="NOT_ANNOTATED_CDS"/>
    <property type="molecule type" value="Genomic_DNA"/>
</dbReference>
<dbReference type="EMBL" id="AC113366">
    <property type="status" value="NOT_ANNOTATED_CDS"/>
    <property type="molecule type" value="Genomic_DNA"/>
</dbReference>
<dbReference type="EMBL" id="BC111743">
    <property type="protein sequence ID" value="AAI11744.1"/>
    <property type="molecule type" value="mRNA"/>
</dbReference>
<dbReference type="EMBL" id="AB028983">
    <property type="protein sequence ID" value="BAA83012.1"/>
    <property type="molecule type" value="mRNA"/>
</dbReference>
<dbReference type="EMBL" id="X74210">
    <property type="protein sequence ID" value="CAA52282.1"/>
    <property type="molecule type" value="mRNA"/>
</dbReference>
<dbReference type="EMBL" id="L21993">
    <property type="protein sequence ID" value="AAA64923.1"/>
    <property type="molecule type" value="mRNA"/>
</dbReference>
<dbReference type="CCDS" id="CCDS3872.2">
    <molecule id="Q08462-1"/>
</dbReference>
<dbReference type="PIR" id="I37136">
    <property type="entry name" value="I37136"/>
</dbReference>
<dbReference type="RefSeq" id="NP_065433.2">
    <molecule id="Q08462-1"/>
    <property type="nucleotide sequence ID" value="NM_020546.3"/>
</dbReference>
<dbReference type="SMR" id="Q08462"/>
<dbReference type="BioGRID" id="106622">
    <property type="interactions" value="12"/>
</dbReference>
<dbReference type="CORUM" id="Q08462"/>
<dbReference type="DIP" id="DIP-422N"/>
<dbReference type="FunCoup" id="Q08462">
    <property type="interactions" value="1540"/>
</dbReference>
<dbReference type="IntAct" id="Q08462">
    <property type="interactions" value="7"/>
</dbReference>
<dbReference type="MINT" id="Q08462"/>
<dbReference type="STRING" id="9606.ENSP00000342952"/>
<dbReference type="BindingDB" id="Q08462"/>
<dbReference type="ChEMBL" id="CHEMBL3760"/>
<dbReference type="DrugBank" id="DB06843">
    <property type="generic name" value="2',5'-DIDEOXY-ADENOSINE 3'-MONOPHOSPHATE"/>
</dbReference>
<dbReference type="DrugBank" id="DB09121">
    <property type="generic name" value="Aurothioglucose"/>
</dbReference>
<dbReference type="DrugBank" id="DB02587">
    <property type="generic name" value="Colforsin"/>
</dbReference>
<dbReference type="GlyCosmos" id="Q08462">
    <property type="glycosylation" value="2 sites, No reported glycans"/>
</dbReference>
<dbReference type="GlyGen" id="Q08462">
    <property type="glycosylation" value="3 sites"/>
</dbReference>
<dbReference type="iPTMnet" id="Q08462"/>
<dbReference type="PhosphoSitePlus" id="Q08462"/>
<dbReference type="SwissPalm" id="Q08462"/>
<dbReference type="BioMuta" id="ADCY2"/>
<dbReference type="DMDM" id="118572617"/>
<dbReference type="jPOST" id="Q08462"/>
<dbReference type="MassIVE" id="Q08462"/>
<dbReference type="PaxDb" id="9606-ENSP00000342952"/>
<dbReference type="PeptideAtlas" id="Q08462"/>
<dbReference type="ProteomicsDB" id="58613">
    <molecule id="Q08462-1"/>
</dbReference>
<dbReference type="ProteomicsDB" id="6429"/>
<dbReference type="Antibodypedia" id="22409">
    <property type="antibodies" value="177 antibodies from 31 providers"/>
</dbReference>
<dbReference type="DNASU" id="108"/>
<dbReference type="Ensembl" id="ENST00000338316.9">
    <molecule id="Q08462-1"/>
    <property type="protein sequence ID" value="ENSP00000342952.4"/>
    <property type="gene ID" value="ENSG00000078295.17"/>
</dbReference>
<dbReference type="GeneID" id="108"/>
<dbReference type="KEGG" id="hsa:108"/>
<dbReference type="MANE-Select" id="ENST00000338316.9">
    <property type="protein sequence ID" value="ENSP00000342952.4"/>
    <property type="RefSeq nucleotide sequence ID" value="NM_020546.3"/>
    <property type="RefSeq protein sequence ID" value="NP_065433.2"/>
</dbReference>
<dbReference type="UCSC" id="uc003jdz.2">
    <molecule id="Q08462-1"/>
    <property type="organism name" value="human"/>
</dbReference>
<dbReference type="AGR" id="HGNC:233"/>
<dbReference type="CTD" id="108"/>
<dbReference type="DisGeNET" id="108"/>
<dbReference type="GeneCards" id="ADCY2"/>
<dbReference type="HGNC" id="HGNC:233">
    <property type="gene designation" value="ADCY2"/>
</dbReference>
<dbReference type="HPA" id="ENSG00000078295">
    <property type="expression patterns" value="Group enriched (brain, skeletal muscle, tongue)"/>
</dbReference>
<dbReference type="MIM" id="103071">
    <property type="type" value="gene"/>
</dbReference>
<dbReference type="neXtProt" id="NX_Q08462"/>
<dbReference type="OpenTargets" id="ENSG00000078295"/>
<dbReference type="PharmGKB" id="PA24561"/>
<dbReference type="VEuPathDB" id="HostDB:ENSG00000078295"/>
<dbReference type="eggNOG" id="KOG3619">
    <property type="taxonomic scope" value="Eukaryota"/>
</dbReference>
<dbReference type="GeneTree" id="ENSGT00940000156424"/>
<dbReference type="HOGENOM" id="CLU_001072_2_5_1"/>
<dbReference type="InParanoid" id="Q08462"/>
<dbReference type="OMA" id="IRILCFN"/>
<dbReference type="OrthoDB" id="10035433at2759"/>
<dbReference type="PAN-GO" id="Q08462">
    <property type="GO annotations" value="3 GO annotations based on evolutionary models"/>
</dbReference>
<dbReference type="PhylomeDB" id="Q08462"/>
<dbReference type="TreeFam" id="TF313845"/>
<dbReference type="BRENDA" id="4.6.1.1">
    <property type="organism ID" value="2681"/>
</dbReference>
<dbReference type="PathwayCommons" id="Q08462"/>
<dbReference type="Reactome" id="R-HSA-163359">
    <property type="pathway name" value="Glucagon signaling in metabolic regulation"/>
</dbReference>
<dbReference type="Reactome" id="R-HSA-163615">
    <property type="pathway name" value="PKA activation"/>
</dbReference>
<dbReference type="Reactome" id="R-HSA-164378">
    <property type="pathway name" value="PKA activation in glucagon signalling"/>
</dbReference>
<dbReference type="Reactome" id="R-HSA-170660">
    <property type="pathway name" value="Adenylate cyclase activating pathway"/>
</dbReference>
<dbReference type="Reactome" id="R-HSA-170670">
    <property type="pathway name" value="Adenylate cyclase inhibitory pathway"/>
</dbReference>
<dbReference type="Reactome" id="R-HSA-418555">
    <property type="pathway name" value="G alpha (s) signalling events"/>
</dbReference>
<dbReference type="Reactome" id="R-HSA-418594">
    <property type="pathway name" value="G alpha (i) signalling events"/>
</dbReference>
<dbReference type="Reactome" id="R-HSA-418597">
    <property type="pathway name" value="G alpha (z) signalling events"/>
</dbReference>
<dbReference type="Reactome" id="R-HSA-432040">
    <property type="pathway name" value="Vasopressin regulates renal water homeostasis via Aquaporins"/>
</dbReference>
<dbReference type="Reactome" id="R-HSA-5610787">
    <property type="pathway name" value="Hedgehog 'off' state"/>
</dbReference>
<dbReference type="Reactome" id="R-HSA-9634597">
    <property type="pathway name" value="GPER1 signaling"/>
</dbReference>
<dbReference type="Reactome" id="R-HSA-9660821">
    <property type="pathway name" value="ADORA2B mediated anti-inflammatory cytokines production"/>
</dbReference>
<dbReference type="Reactome" id="R-HSA-9664323">
    <property type="pathway name" value="FCGR3A-mediated IL10 synthesis"/>
</dbReference>
<dbReference type="Reactome" id="R-HSA-9856530">
    <property type="pathway name" value="High laminar flow shear stress activates signaling by PIEZO1 and PECAM1:CDH5:KDR in endothelial cells"/>
</dbReference>
<dbReference type="SignaLink" id="Q08462"/>
<dbReference type="SIGNOR" id="Q08462"/>
<dbReference type="BioGRID-ORCS" id="108">
    <property type="hits" value="3 hits in 1145 CRISPR screens"/>
</dbReference>
<dbReference type="ChiTaRS" id="ADCY2">
    <property type="organism name" value="human"/>
</dbReference>
<dbReference type="GeneWiki" id="ADCY2"/>
<dbReference type="GenomeRNAi" id="108"/>
<dbReference type="Pharos" id="Q08462">
    <property type="development level" value="Tchem"/>
</dbReference>
<dbReference type="PRO" id="PR:Q08462"/>
<dbReference type="Proteomes" id="UP000005640">
    <property type="component" value="Chromosome 5"/>
</dbReference>
<dbReference type="RNAct" id="Q08462">
    <property type="molecule type" value="protein"/>
</dbReference>
<dbReference type="Bgee" id="ENSG00000078295">
    <property type="expression patterns" value="Expressed in middle temporal gyrus and 179 other cell types or tissues"/>
</dbReference>
<dbReference type="ExpressionAtlas" id="Q08462">
    <property type="expression patterns" value="baseline and differential"/>
</dbReference>
<dbReference type="GO" id="GO:0005737">
    <property type="term" value="C:cytoplasm"/>
    <property type="evidence" value="ECO:0000314"/>
    <property type="project" value="UniProtKB"/>
</dbReference>
<dbReference type="GO" id="GO:0030425">
    <property type="term" value="C:dendrite"/>
    <property type="evidence" value="ECO:0000250"/>
    <property type="project" value="UniProtKB"/>
</dbReference>
<dbReference type="GO" id="GO:0016020">
    <property type="term" value="C:membrane"/>
    <property type="evidence" value="ECO:0000250"/>
    <property type="project" value="UniProtKB"/>
</dbReference>
<dbReference type="GO" id="GO:0045121">
    <property type="term" value="C:membrane raft"/>
    <property type="evidence" value="ECO:0000250"/>
    <property type="project" value="BHF-UCL"/>
</dbReference>
<dbReference type="GO" id="GO:0005886">
    <property type="term" value="C:plasma membrane"/>
    <property type="evidence" value="ECO:0000314"/>
    <property type="project" value="UniProtKB"/>
</dbReference>
<dbReference type="GO" id="GO:0004016">
    <property type="term" value="F:adenylate cyclase activity"/>
    <property type="evidence" value="ECO:0000250"/>
    <property type="project" value="BHF-UCL"/>
</dbReference>
<dbReference type="GO" id="GO:0008179">
    <property type="term" value="F:adenylate cyclase binding"/>
    <property type="evidence" value="ECO:0000250"/>
    <property type="project" value="BHF-UCL"/>
</dbReference>
<dbReference type="GO" id="GO:0005524">
    <property type="term" value="F:ATP binding"/>
    <property type="evidence" value="ECO:0007669"/>
    <property type="project" value="UniProtKB-KW"/>
</dbReference>
<dbReference type="GO" id="GO:0000287">
    <property type="term" value="F:magnesium ion binding"/>
    <property type="evidence" value="ECO:0000250"/>
    <property type="project" value="UniProtKB"/>
</dbReference>
<dbReference type="GO" id="GO:0030145">
    <property type="term" value="F:manganese ion binding"/>
    <property type="evidence" value="ECO:0000250"/>
    <property type="project" value="UniProtKB"/>
</dbReference>
<dbReference type="GO" id="GO:0007189">
    <property type="term" value="P:adenylate cyclase-activating G protein-coupled receptor signaling pathway"/>
    <property type="evidence" value="ECO:0000250"/>
    <property type="project" value="UniProtKB"/>
</dbReference>
<dbReference type="GO" id="GO:0007188">
    <property type="term" value="P:adenylate cyclase-modulating G protein-coupled receptor signaling pathway"/>
    <property type="evidence" value="ECO:0000250"/>
    <property type="project" value="BHF-UCL"/>
</dbReference>
<dbReference type="GO" id="GO:0006171">
    <property type="term" value="P:cAMP biosynthetic process"/>
    <property type="evidence" value="ECO:0000250"/>
    <property type="project" value="BHF-UCL"/>
</dbReference>
<dbReference type="GO" id="GO:1904322">
    <property type="term" value="P:cellular response to forskolin"/>
    <property type="evidence" value="ECO:0000250"/>
    <property type="project" value="UniProtKB"/>
</dbReference>
<dbReference type="GO" id="GO:0035556">
    <property type="term" value="P:intracellular signal transduction"/>
    <property type="evidence" value="ECO:0007669"/>
    <property type="project" value="InterPro"/>
</dbReference>
<dbReference type="CDD" id="cd07302">
    <property type="entry name" value="CHD"/>
    <property type="match status" value="2"/>
</dbReference>
<dbReference type="FunFam" id="3.30.70.1230:FF:000003">
    <property type="entry name" value="Adenylate cyclase"/>
    <property type="match status" value="1"/>
</dbReference>
<dbReference type="FunFam" id="3.30.70.1230:FF:000010">
    <property type="entry name" value="Adenylate cyclase 2"/>
    <property type="match status" value="1"/>
</dbReference>
<dbReference type="Gene3D" id="3.30.70.1230">
    <property type="entry name" value="Nucleotide cyclase"/>
    <property type="match status" value="2"/>
</dbReference>
<dbReference type="InterPro" id="IPR001054">
    <property type="entry name" value="A/G_cyclase"/>
</dbReference>
<dbReference type="InterPro" id="IPR018297">
    <property type="entry name" value="A/G_cyclase_CS"/>
</dbReference>
<dbReference type="InterPro" id="IPR032628">
    <property type="entry name" value="AC_N"/>
</dbReference>
<dbReference type="InterPro" id="IPR030672">
    <property type="entry name" value="Adcy"/>
</dbReference>
<dbReference type="InterPro" id="IPR009398">
    <property type="entry name" value="Adcy_conserved_dom"/>
</dbReference>
<dbReference type="InterPro" id="IPR029787">
    <property type="entry name" value="Nucleotide_cyclase"/>
</dbReference>
<dbReference type="PANTHER" id="PTHR45627">
    <property type="entry name" value="ADENYLATE CYCLASE TYPE 1"/>
    <property type="match status" value="1"/>
</dbReference>
<dbReference type="PANTHER" id="PTHR45627:SF6">
    <property type="entry name" value="ADENYLATE CYCLASE TYPE 2"/>
    <property type="match status" value="1"/>
</dbReference>
<dbReference type="Pfam" id="PF16214">
    <property type="entry name" value="AC_N"/>
    <property type="match status" value="1"/>
</dbReference>
<dbReference type="Pfam" id="PF06327">
    <property type="entry name" value="Adcy_cons_dom"/>
    <property type="match status" value="1"/>
</dbReference>
<dbReference type="Pfam" id="PF00211">
    <property type="entry name" value="Guanylate_cyc"/>
    <property type="match status" value="2"/>
</dbReference>
<dbReference type="PIRSF" id="PIRSF039050">
    <property type="entry name" value="Ade_cyc"/>
    <property type="match status" value="1"/>
</dbReference>
<dbReference type="SMART" id="SM00044">
    <property type="entry name" value="CYCc"/>
    <property type="match status" value="2"/>
</dbReference>
<dbReference type="SUPFAM" id="SSF55073">
    <property type="entry name" value="Nucleotide cyclase"/>
    <property type="match status" value="2"/>
</dbReference>
<dbReference type="PROSITE" id="PS00452">
    <property type="entry name" value="GUANYLATE_CYCLASE_1"/>
    <property type="match status" value="2"/>
</dbReference>
<dbReference type="PROSITE" id="PS50125">
    <property type="entry name" value="GUANYLATE_CYCLASE_2"/>
    <property type="match status" value="2"/>
</dbReference>
<proteinExistence type="evidence at protein level"/>
<keyword id="KW-0025">Alternative splicing</keyword>
<keyword id="KW-0067">ATP-binding</keyword>
<keyword id="KW-0115">cAMP biosynthesis</keyword>
<keyword id="KW-1003">Cell membrane</keyword>
<keyword id="KW-0963">Cytoplasm</keyword>
<keyword id="KW-0325">Glycoprotein</keyword>
<keyword id="KW-0456">Lyase</keyword>
<keyword id="KW-0460">Magnesium</keyword>
<keyword id="KW-0464">Manganese</keyword>
<keyword id="KW-0472">Membrane</keyword>
<keyword id="KW-0479">Metal-binding</keyword>
<keyword id="KW-0547">Nucleotide-binding</keyword>
<keyword id="KW-0597">Phosphoprotein</keyword>
<keyword id="KW-1267">Proteomics identification</keyword>
<keyword id="KW-1185">Reference proteome</keyword>
<keyword id="KW-0677">Repeat</keyword>
<keyword id="KW-0812">Transmembrane</keyword>
<keyword id="KW-1133">Transmembrane helix</keyword>
<name>ADCY2_HUMAN</name>
<gene>
    <name type="primary">ADCY2</name>
    <name type="synonym">KIAA1060</name>
</gene>
<sequence>MWQEAMRRRRYLRDRSEEAAGGGDGLPRSRDWLYESYYCMSQQHPLIVFLLLIVMGSCLALLAVFFALGLEVEDHVAFLITVPTALAIFFAIFILVCIESVFKKLLRLFSLVIWICLVAMGYLFMCFGGTVSPWDQVSFFLFIIFVVYTMLPFNMRDAIIASVLTSSSHTIVLSVCLSATPGGKEHLVWQILANVIIFICGNLAGAYHKHLMELALQQTYQDTCNCIKSRIKLEFEKRQQERLLLSLLPAHIAMEMKAEIIQRLQGPKAGQMENTNNFHNLYVKRHTNVSILYADIVGFTRLASDCSPGELVHMLNELFGKFDQIAKENECMRIKILGDCYYCVSGLPISLPNHAKNCVKMGLDMCEAIKKVRDATGVDINMRVGVHSGNVLCGVIGLQKWQYDVWSHDVTLANHMEAGGVPGRVHISSVTLEHLNGAYKVEEGDGDIRDPYLKQHLVKTYFVINPKGERRSPQHLFRPRHTLDGAKMRASVRMTRYLESWGAAKPFAHLHHRDSMTTENGKISTTDVPMGQHNFQNRTLRTKSQKKRFEEELNERMIQAIDGINAQKQWLKSEDIQRISLLFYNKVLEKEYRATALPAFKYYVTCACLIFFCIFIVQILVLPKTSVLGISFGAAFLLLAFILFVCFAGQLLQCSKKASPLLMWLLKSSGIIANRPWPRISLTIITTAIILMMAVFNMFFLSDSEETIPPTANTTNTSFSASNNQVAILRAQNLFFLPYFIYSCILGLISCSVFLRVNYELKMLIMMVALVGYNTILLHTHAHVLGDYSQVLFERPGIWKDLKTMGSVSLSIFFITLLVLGRQNEYYCRLDFLWKNKFKKEREEIETMENLNRVLLENVLPAHVAEHFLARSLKNEELYHQSYDCVCVMFASIPDFKEFYTESDVNKEGLECLRLLNEIIADFDDLLSKPKFSGVEKIKTIGSTYMAATGLSAVPSQEHSQEPERQYMHIGTMVEFAFALVGKLDAINKHSFNDFKLRVGINHGPVIAGVIGAQKPQYDIWGNTVNVASRMDSTGVLDKIQVTEETSLVLQTLGYTCTCRGIINVKGKGDLKTYFVNTEMSRSLSQSNVAS</sequence>
<comment type="function">
    <text evidence="1 6">Catalyzes the formation of the signaling molecule cAMP in response to G-protein signaling (PubMed:15385642). Down-stream signaling cascades mediate changes in gene expression patterns and lead to increased IL6 production. Functions in signaling cascades downstream of the muscarinic acetylcholine receptors (By similarity).</text>
</comment>
<comment type="catalytic activity">
    <reaction evidence="6">
        <text>ATP = 3',5'-cyclic AMP + diphosphate</text>
        <dbReference type="Rhea" id="RHEA:15389"/>
        <dbReference type="ChEBI" id="CHEBI:30616"/>
        <dbReference type="ChEBI" id="CHEBI:33019"/>
        <dbReference type="ChEBI" id="CHEBI:58165"/>
        <dbReference type="EC" id="4.6.1.1"/>
    </reaction>
</comment>
<comment type="cofactor">
    <cofactor evidence="6">
        <name>Mg(2+)</name>
        <dbReference type="ChEBI" id="CHEBI:18420"/>
    </cofactor>
    <cofactor evidence="6">
        <name>Mn(2+)</name>
        <dbReference type="ChEBI" id="CHEBI:29035"/>
    </cofactor>
    <text evidence="1">Binds 2 magnesium ions per subunit. Is also active with manganese (in vitro).</text>
</comment>
<comment type="activity regulation">
    <text evidence="1 6">Activated by forskolin (PubMed:15385642). Is not activated by calmodulin. Inhibited by calcium ions, already at micromolar concentration. Activated by the G protein alpha subunit GNAS. Activated by the G protein beta and gamma subunit complex (By similarity). Phosphorylation by RAF1 results in its activation (PubMed:15385642). Phosphorylation by PKC activates the enzyme (By similarity).</text>
</comment>
<comment type="subunit">
    <text evidence="1 6">Interacts with RAF1 (PubMed:15385642). Interacts with GNAS. Interacts with the G protein beta and gamma subunit complex (By similarity).</text>
</comment>
<comment type="subcellular location">
    <subcellularLocation>
        <location evidence="6">Membrane</location>
        <topology evidence="11">Multi-pass membrane protein</topology>
    </subcellularLocation>
    <subcellularLocation>
        <location evidence="5 8">Cell membrane</location>
        <topology evidence="11">Multi-pass membrane protein</topology>
    </subcellularLocation>
    <subcellularLocation>
        <location evidence="5">Cytoplasm</location>
    </subcellularLocation>
</comment>
<comment type="alternative products">
    <event type="alternative splicing"/>
    <isoform>
        <id>Q08462-1</id>
        <name>1</name>
        <sequence type="displayed"/>
    </isoform>
    <isoform>
        <id>Q08462-2</id>
        <name>2</name>
        <sequence type="described" ref="VSP_055811 VSP_055812"/>
    </isoform>
</comment>
<comment type="tissue specificity">
    <text evidence="5 9">Detected in zona glomerulosa and zona fasciculata in the adrenal gland (at protein level) (PubMed:11549699). Expressed in brain, especially in caudate nucleus, cerebellum and hippocampus.</text>
</comment>
<comment type="domain">
    <text evidence="1">The protein contains two modules with six transmembrane helices each; both are required for catalytic activity. Isolated N-terminal or C-terminal guanylate cyclase domains have no catalytic activity, but when they are brought together, enzyme activity is restored. The active site is at the interface of the two domains. Both contribute substrate-binding residues, but the catalytic metal ions are bound exclusively via the N-terminal guanylate cyclase domain.</text>
</comment>
<comment type="PTM">
    <text evidence="6">Phosphorylated by RAF1.</text>
</comment>
<comment type="similarity">
    <text evidence="4">Belongs to the adenylyl cyclase class-4/guanylyl cyclase family.</text>
</comment>
<evidence type="ECO:0000250" key="1">
    <source>
        <dbReference type="UniProtKB" id="P26769"/>
    </source>
</evidence>
<evidence type="ECO:0000250" key="2">
    <source>
        <dbReference type="UniProtKB" id="P30803"/>
    </source>
</evidence>
<evidence type="ECO:0000255" key="3"/>
<evidence type="ECO:0000255" key="4">
    <source>
        <dbReference type="PROSITE-ProRule" id="PRU00099"/>
    </source>
</evidence>
<evidence type="ECO:0000269" key="5">
    <source>
    </source>
</evidence>
<evidence type="ECO:0000269" key="6">
    <source>
    </source>
</evidence>
<evidence type="ECO:0000269" key="7">
    <source>
    </source>
</evidence>
<evidence type="ECO:0000269" key="8">
    <source>
    </source>
</evidence>
<evidence type="ECO:0000269" key="9">
    <source>
    </source>
</evidence>
<evidence type="ECO:0000303" key="10">
    <source>
    </source>
</evidence>
<evidence type="ECO:0000305" key="11"/>
<protein>
    <recommendedName>
        <fullName>Adenylate cyclase type 2</fullName>
        <ecNumber evidence="6">4.6.1.1</ecNumber>
    </recommendedName>
    <alternativeName>
        <fullName>ATP pyrophosphate-lyase 2</fullName>
    </alternativeName>
    <alternativeName>
        <fullName>Adenylate cyclase type II</fullName>
    </alternativeName>
    <alternativeName>
        <fullName>Adenylyl cyclase 2</fullName>
    </alternativeName>
</protein>
<accession>Q08462</accession>
<accession>B7Z2C1</accession>
<accession>Q2NKL8</accession>
<accession>Q9UDB2</accession>
<accession>Q9UPU2</accession>
<organism>
    <name type="scientific">Homo sapiens</name>
    <name type="common">Human</name>
    <dbReference type="NCBI Taxonomy" id="9606"/>
    <lineage>
        <taxon>Eukaryota</taxon>
        <taxon>Metazoa</taxon>
        <taxon>Chordata</taxon>
        <taxon>Craniata</taxon>
        <taxon>Vertebrata</taxon>
        <taxon>Euteleostomi</taxon>
        <taxon>Mammalia</taxon>
        <taxon>Eutheria</taxon>
        <taxon>Euarchontoglires</taxon>
        <taxon>Primates</taxon>
        <taxon>Haplorrhini</taxon>
        <taxon>Catarrhini</taxon>
        <taxon>Hominidae</taxon>
        <taxon>Homo</taxon>
    </lineage>
</organism>
<feature type="chain" id="PRO_0000195684" description="Adenylate cyclase type 2">
    <location>
        <begin position="1"/>
        <end position="1091"/>
    </location>
</feature>
<feature type="topological domain" description="Cytoplasmic" evidence="3">
    <location>
        <begin position="1"/>
        <end position="45"/>
    </location>
</feature>
<feature type="transmembrane region" description="Helical" evidence="3">
    <location>
        <begin position="46"/>
        <end position="66"/>
    </location>
</feature>
<feature type="transmembrane region" description="Helical" evidence="3">
    <location>
        <begin position="76"/>
        <end position="96"/>
    </location>
</feature>
<feature type="transmembrane region" description="Helical" evidence="3">
    <location>
        <begin position="108"/>
        <end position="128"/>
    </location>
</feature>
<feature type="transmembrane region" description="Helical" evidence="3">
    <location>
        <begin position="133"/>
        <end position="153"/>
    </location>
</feature>
<feature type="transmembrane region" description="Helical" evidence="3">
    <location>
        <begin position="159"/>
        <end position="179"/>
    </location>
</feature>
<feature type="transmembrane region" description="Helical" evidence="3">
    <location>
        <begin position="187"/>
        <end position="207"/>
    </location>
</feature>
<feature type="topological domain" description="Cytoplasmic" evidence="3">
    <location>
        <begin position="208"/>
        <end position="601"/>
    </location>
</feature>
<feature type="transmembrane region" description="Helical" evidence="3">
    <location>
        <begin position="602"/>
        <end position="622"/>
    </location>
</feature>
<feature type="transmembrane region" description="Helical" evidence="3">
    <location>
        <begin position="628"/>
        <end position="652"/>
    </location>
</feature>
<feature type="transmembrane region" description="Helical" evidence="3">
    <location>
        <begin position="680"/>
        <end position="701"/>
    </location>
</feature>
<feature type="transmembrane region" description="Helical" evidence="3">
    <location>
        <begin position="734"/>
        <end position="755"/>
    </location>
</feature>
<feature type="transmembrane region" description="Helical" evidence="3">
    <location>
        <begin position="763"/>
        <end position="780"/>
    </location>
</feature>
<feature type="transmembrane region" description="Helical" evidence="3">
    <location>
        <begin position="801"/>
        <end position="821"/>
    </location>
</feature>
<feature type="topological domain" description="Cytoplasmic" evidence="3">
    <location>
        <begin position="822"/>
        <end position="1091"/>
    </location>
</feature>
<feature type="region of interest" description="Interaction with GNAS" evidence="1">
    <location>
        <begin position="905"/>
        <end position="922"/>
    </location>
</feature>
<feature type="region of interest" description="Interaction with GNAS" evidence="1">
    <location>
        <begin position="990"/>
        <end position="993"/>
    </location>
</feature>
<feature type="binding site" evidence="2">
    <location>
        <begin position="295"/>
        <end position="300"/>
    </location>
    <ligand>
        <name>ATP</name>
        <dbReference type="ChEBI" id="CHEBI:30616"/>
    </ligand>
</feature>
<feature type="binding site" evidence="4">
    <location>
        <position position="295"/>
    </location>
    <ligand>
        <name>Mg(2+)</name>
        <dbReference type="ChEBI" id="CHEBI:18420"/>
        <label>1</label>
        <note>catalytic</note>
    </ligand>
</feature>
<feature type="binding site" evidence="4">
    <location>
        <position position="295"/>
    </location>
    <ligand>
        <name>Mg(2+)</name>
        <dbReference type="ChEBI" id="CHEBI:18420"/>
        <label>2</label>
        <note>catalytic</note>
    </ligand>
</feature>
<feature type="binding site" evidence="4">
    <location>
        <position position="296"/>
    </location>
    <ligand>
        <name>Mg(2+)</name>
        <dbReference type="ChEBI" id="CHEBI:18420"/>
        <label>2</label>
        <note>catalytic</note>
    </ligand>
</feature>
<feature type="binding site" evidence="2">
    <location>
        <begin position="337"/>
        <end position="339"/>
    </location>
    <ligand>
        <name>ATP</name>
        <dbReference type="ChEBI" id="CHEBI:30616"/>
    </ligand>
</feature>
<feature type="binding site" evidence="4">
    <location>
        <position position="339"/>
    </location>
    <ligand>
        <name>Mg(2+)</name>
        <dbReference type="ChEBI" id="CHEBI:18420"/>
        <label>1</label>
        <note>catalytic</note>
    </ligand>
</feature>
<feature type="binding site" evidence="4">
    <location>
        <position position="339"/>
    </location>
    <ligand>
        <name>Mg(2+)</name>
        <dbReference type="ChEBI" id="CHEBI:18420"/>
        <label>2</label>
        <note>catalytic</note>
    </ligand>
</feature>
<feature type="binding site" evidence="2">
    <location>
        <position position="383"/>
    </location>
    <ligand>
        <name>ATP</name>
        <dbReference type="ChEBI" id="CHEBI:30616"/>
    </ligand>
</feature>
<feature type="binding site" evidence="1">
    <location>
        <position position="939"/>
    </location>
    <ligand>
        <name>ATP</name>
        <dbReference type="ChEBI" id="CHEBI:30616"/>
    </ligand>
</feature>
<feature type="binding site" evidence="1">
    <location>
        <begin position="1019"/>
        <end position="1021"/>
    </location>
    <ligand>
        <name>ATP</name>
        <dbReference type="ChEBI" id="CHEBI:30616"/>
    </ligand>
</feature>
<feature type="binding site" evidence="1">
    <location>
        <begin position="1026"/>
        <end position="1030"/>
    </location>
    <ligand>
        <name>ATP</name>
        <dbReference type="ChEBI" id="CHEBI:30616"/>
    </ligand>
</feature>
<feature type="binding site" evidence="1">
    <location>
        <position position="1066"/>
    </location>
    <ligand>
        <name>ATP</name>
        <dbReference type="ChEBI" id="CHEBI:30616"/>
    </ligand>
</feature>
<feature type="modified residue" description="Phosphoserine; by PKC" evidence="1">
    <location>
        <position position="491"/>
    </location>
</feature>
<feature type="modified residue" description="Phosphoserine; by PKC" evidence="1">
    <location>
        <position position="544"/>
    </location>
</feature>
<feature type="glycosylation site" description="N-linked (GlcNAc...) asparagine" evidence="3">
    <location>
        <position position="713"/>
    </location>
</feature>
<feature type="glycosylation site" description="N-linked (GlcNAc...) asparagine" evidence="3">
    <location>
        <position position="716"/>
    </location>
</feature>
<feature type="splice variant" id="VSP_055811" description="In isoform 2." evidence="10">
    <original>MWQEAMRRRRYLRDRSEEAAGGGDGLPRSRDWLYESYYCMSQQHPLIVFLLLIVMGSCL</original>
    <variation>MDLRWARDLHLREASRSVAFTTLRLGAVTTGLLTFREPGDKEKSGKGLGKRWRIQREES</variation>
    <location>
        <begin position="1"/>
        <end position="59"/>
    </location>
</feature>
<feature type="splice variant" id="VSP_055812" description="In isoform 2." evidence="10">
    <location>
        <begin position="60"/>
        <end position="239"/>
    </location>
</feature>
<feature type="sequence variant" id="VAR_029012" description="In dbSNP:rs13166360." evidence="7">
    <original>V</original>
    <variation>L</variation>
    <location>
        <position position="147"/>
    </location>
</feature>
<feature type="sequence variant" id="VAR_048247" description="In dbSNP:rs34043481.">
    <original>V</original>
    <variation>I</variation>
    <location>
        <position position="163"/>
    </location>
</feature>
<feature type="sequence conflict" description="In Ref. 1; AAP97285." evidence="11" ref="1">
    <original>VWQILANVIIFICGNLAGAY</original>
    <variation>GLADPGQCDHFHLWEPGXTN</variation>
    <location>
        <begin position="188"/>
        <end position="207"/>
    </location>
</feature>
<feature type="sequence conflict" description="In Ref. 6; CAA52282/AAA64923." evidence="11" ref="6">
    <original>R</original>
    <variation>Q</variation>
    <location>
        <position position="675"/>
    </location>
</feature>